<name>ACEK_ECO55</name>
<sequence>MPRGLELLIAQTILQGFDAQYGRFLEVTSGAQQRFEQADWHAVQQAMKNRIHLYDHHVGLVVEQLRCITNGQSTDAAFLLRVKEHYTRLLPDYPRFEIAESFFNSVYCRLFDHRSLTPERLFIFSSQPERRFRTIPRPLAKDFHPDHGWESLLMRVISDLPLRLRWQNKSRDIHYIIRHLTETLGTDNLAESHLQVANELFYRNKAAWLVGKLITPSGTLPFLLPIHQTDDGELFIDTCLTTTAEASIVFGFARSYFMVYAPLPAALVEWLREILPGKTTAELYMAIGCQKHAKTESYREYLVYLQGCNEQFIEAPGIRGMVMLVFTLPGFDRVFKVIKDKFAPQKEMSAAHVRACYQLVKEHDRVGRMADTQEFENFVLEKRHISPALMELLLQEAAEKITDLGEQIVIRHLYIERRMVPLNIWLEQVEGQQLRDAIEEYGNAIRQLAAANIFPGDMLFKNFGVTRHGRVVFYDYDEICYMTEVNFRDIPPPRYPEDELASEPWYSVSPGDVFPEEFRHWLCADPRIGPLFEEMHADLFRADYWRALQNRIREGHVEDVYAYRRRQRFSVRYGEMLF</sequence>
<dbReference type="EC" id="2.7.11.5" evidence="1"/>
<dbReference type="EC" id="3.1.3.-" evidence="1"/>
<dbReference type="EMBL" id="CU928145">
    <property type="protein sequence ID" value="CAV01271.1"/>
    <property type="molecule type" value="Genomic_DNA"/>
</dbReference>
<dbReference type="RefSeq" id="WP_001137214.1">
    <property type="nucleotide sequence ID" value="NC_011748.1"/>
</dbReference>
<dbReference type="SMR" id="B7LAV8"/>
<dbReference type="GeneID" id="75204156"/>
<dbReference type="KEGG" id="eck:EC55989_4501"/>
<dbReference type="HOGENOM" id="CLU_033804_1_1_6"/>
<dbReference type="Proteomes" id="UP000000746">
    <property type="component" value="Chromosome"/>
</dbReference>
<dbReference type="GO" id="GO:0005737">
    <property type="term" value="C:cytoplasm"/>
    <property type="evidence" value="ECO:0007669"/>
    <property type="project" value="UniProtKB-SubCell"/>
</dbReference>
<dbReference type="GO" id="GO:0008772">
    <property type="term" value="F:[isocitrate dehydrogenase (NADP+)] kinase activity"/>
    <property type="evidence" value="ECO:0007669"/>
    <property type="project" value="UniProtKB-UniRule"/>
</dbReference>
<dbReference type="GO" id="GO:0016208">
    <property type="term" value="F:AMP binding"/>
    <property type="evidence" value="ECO:0007669"/>
    <property type="project" value="TreeGrafter"/>
</dbReference>
<dbReference type="GO" id="GO:0005524">
    <property type="term" value="F:ATP binding"/>
    <property type="evidence" value="ECO:0007669"/>
    <property type="project" value="UniProtKB-UniRule"/>
</dbReference>
<dbReference type="GO" id="GO:0004721">
    <property type="term" value="F:phosphoprotein phosphatase activity"/>
    <property type="evidence" value="ECO:0007669"/>
    <property type="project" value="UniProtKB-KW"/>
</dbReference>
<dbReference type="GO" id="GO:0004674">
    <property type="term" value="F:protein serine/threonine kinase activity"/>
    <property type="evidence" value="ECO:0007669"/>
    <property type="project" value="UniProtKB-KW"/>
</dbReference>
<dbReference type="GO" id="GO:0006006">
    <property type="term" value="P:glucose metabolic process"/>
    <property type="evidence" value="ECO:0007669"/>
    <property type="project" value="InterPro"/>
</dbReference>
<dbReference type="GO" id="GO:0006097">
    <property type="term" value="P:glyoxylate cycle"/>
    <property type="evidence" value="ECO:0007669"/>
    <property type="project" value="UniProtKB-UniRule"/>
</dbReference>
<dbReference type="GO" id="GO:0006099">
    <property type="term" value="P:tricarboxylic acid cycle"/>
    <property type="evidence" value="ECO:0007669"/>
    <property type="project" value="UniProtKB-UniRule"/>
</dbReference>
<dbReference type="HAMAP" id="MF_00747">
    <property type="entry name" value="AceK"/>
    <property type="match status" value="1"/>
</dbReference>
<dbReference type="InterPro" id="IPR046855">
    <property type="entry name" value="AceK_kinase"/>
</dbReference>
<dbReference type="InterPro" id="IPR046854">
    <property type="entry name" value="AceK_regulatory"/>
</dbReference>
<dbReference type="InterPro" id="IPR010452">
    <property type="entry name" value="Isocitrate_DH_AceK"/>
</dbReference>
<dbReference type="NCBIfam" id="NF002804">
    <property type="entry name" value="PRK02946.1"/>
    <property type="match status" value="1"/>
</dbReference>
<dbReference type="PANTHER" id="PTHR39559">
    <property type="match status" value="1"/>
</dbReference>
<dbReference type="PANTHER" id="PTHR39559:SF1">
    <property type="entry name" value="ISOCITRATE DEHYDROGENASE KINASE_PHOSPHATASE"/>
    <property type="match status" value="1"/>
</dbReference>
<dbReference type="Pfam" id="PF06315">
    <property type="entry name" value="AceK_kinase"/>
    <property type="match status" value="1"/>
</dbReference>
<dbReference type="Pfam" id="PF20423">
    <property type="entry name" value="AceK_regulatory"/>
    <property type="match status" value="1"/>
</dbReference>
<dbReference type="PIRSF" id="PIRSF000719">
    <property type="entry name" value="AceK"/>
    <property type="match status" value="1"/>
</dbReference>
<comment type="function">
    <text evidence="1">Bifunctional enzyme which can phosphorylate or dephosphorylate isocitrate dehydrogenase (IDH) on a specific serine residue. This is a regulatory mechanism which enables bacteria to bypass the Krebs cycle via the glyoxylate shunt in response to the source of carbon. When bacteria are grown on glucose, IDH is fully active and unphosphorylated, but when grown on acetate or ethanol, the activity of IDH declines drastically concomitant with its phosphorylation.</text>
</comment>
<comment type="catalytic activity">
    <reaction evidence="1">
        <text>L-seryl-[isocitrate dehydrogenase] + ATP = O-phospho-L-seryl-[isocitrate dehydrogenase] + ADP + H(+)</text>
        <dbReference type="Rhea" id="RHEA:43540"/>
        <dbReference type="Rhea" id="RHEA-COMP:10605"/>
        <dbReference type="Rhea" id="RHEA-COMP:10606"/>
        <dbReference type="ChEBI" id="CHEBI:15378"/>
        <dbReference type="ChEBI" id="CHEBI:29999"/>
        <dbReference type="ChEBI" id="CHEBI:30616"/>
        <dbReference type="ChEBI" id="CHEBI:83421"/>
        <dbReference type="ChEBI" id="CHEBI:456216"/>
        <dbReference type="EC" id="2.7.11.5"/>
    </reaction>
</comment>
<comment type="subcellular location">
    <subcellularLocation>
        <location evidence="1">Cytoplasm</location>
    </subcellularLocation>
</comment>
<comment type="similarity">
    <text evidence="1">Belongs to the AceK family.</text>
</comment>
<feature type="chain" id="PRO_1000148339" description="Isocitrate dehydrogenase kinase/phosphatase">
    <location>
        <begin position="1"/>
        <end position="578"/>
    </location>
</feature>
<feature type="active site" evidence="1">
    <location>
        <position position="371"/>
    </location>
</feature>
<feature type="binding site" evidence="1">
    <location>
        <begin position="315"/>
        <end position="321"/>
    </location>
    <ligand>
        <name>ATP</name>
        <dbReference type="ChEBI" id="CHEBI:30616"/>
    </ligand>
</feature>
<feature type="binding site" evidence="1">
    <location>
        <position position="336"/>
    </location>
    <ligand>
        <name>ATP</name>
        <dbReference type="ChEBI" id="CHEBI:30616"/>
    </ligand>
</feature>
<organism>
    <name type="scientific">Escherichia coli (strain 55989 / EAEC)</name>
    <dbReference type="NCBI Taxonomy" id="585055"/>
    <lineage>
        <taxon>Bacteria</taxon>
        <taxon>Pseudomonadati</taxon>
        <taxon>Pseudomonadota</taxon>
        <taxon>Gammaproteobacteria</taxon>
        <taxon>Enterobacterales</taxon>
        <taxon>Enterobacteriaceae</taxon>
        <taxon>Escherichia</taxon>
    </lineage>
</organism>
<keyword id="KW-0067">ATP-binding</keyword>
<keyword id="KW-0963">Cytoplasm</keyword>
<keyword id="KW-0329">Glyoxylate bypass</keyword>
<keyword id="KW-0378">Hydrolase</keyword>
<keyword id="KW-0418">Kinase</keyword>
<keyword id="KW-0547">Nucleotide-binding</keyword>
<keyword id="KW-0904">Protein phosphatase</keyword>
<keyword id="KW-1185">Reference proteome</keyword>
<keyword id="KW-0723">Serine/threonine-protein kinase</keyword>
<keyword id="KW-0808">Transferase</keyword>
<keyword id="KW-0816">Tricarboxylic acid cycle</keyword>
<proteinExistence type="inferred from homology"/>
<reference key="1">
    <citation type="journal article" date="2009" name="PLoS Genet.">
        <title>Organised genome dynamics in the Escherichia coli species results in highly diverse adaptive paths.</title>
        <authorList>
            <person name="Touchon M."/>
            <person name="Hoede C."/>
            <person name="Tenaillon O."/>
            <person name="Barbe V."/>
            <person name="Baeriswyl S."/>
            <person name="Bidet P."/>
            <person name="Bingen E."/>
            <person name="Bonacorsi S."/>
            <person name="Bouchier C."/>
            <person name="Bouvet O."/>
            <person name="Calteau A."/>
            <person name="Chiapello H."/>
            <person name="Clermont O."/>
            <person name="Cruveiller S."/>
            <person name="Danchin A."/>
            <person name="Diard M."/>
            <person name="Dossat C."/>
            <person name="Karoui M.E."/>
            <person name="Frapy E."/>
            <person name="Garry L."/>
            <person name="Ghigo J.M."/>
            <person name="Gilles A.M."/>
            <person name="Johnson J."/>
            <person name="Le Bouguenec C."/>
            <person name="Lescat M."/>
            <person name="Mangenot S."/>
            <person name="Martinez-Jehanne V."/>
            <person name="Matic I."/>
            <person name="Nassif X."/>
            <person name="Oztas S."/>
            <person name="Petit M.A."/>
            <person name="Pichon C."/>
            <person name="Rouy Z."/>
            <person name="Ruf C.S."/>
            <person name="Schneider D."/>
            <person name="Tourret J."/>
            <person name="Vacherie B."/>
            <person name="Vallenet D."/>
            <person name="Medigue C."/>
            <person name="Rocha E.P.C."/>
            <person name="Denamur E."/>
        </authorList>
    </citation>
    <scope>NUCLEOTIDE SEQUENCE [LARGE SCALE GENOMIC DNA]</scope>
    <source>
        <strain>55989 / EAEC</strain>
    </source>
</reference>
<protein>
    <recommendedName>
        <fullName evidence="1">Isocitrate dehydrogenase kinase/phosphatase</fullName>
        <shortName evidence="1">IDH kinase/phosphatase</shortName>
        <shortName evidence="1">IDHK/P</shortName>
        <ecNumber evidence="1">2.7.11.5</ecNumber>
        <ecNumber evidence="1">3.1.3.-</ecNumber>
    </recommendedName>
</protein>
<accession>B7LAV8</accession>
<evidence type="ECO:0000255" key="1">
    <source>
        <dbReference type="HAMAP-Rule" id="MF_00747"/>
    </source>
</evidence>
<gene>
    <name evidence="1" type="primary">aceK</name>
    <name type="ordered locus">EC55989_4501</name>
</gene>